<reference key="1">
    <citation type="submission" date="2004-09" db="EMBL/GenBank/DDBJ databases">
        <title>Potential immune markers from a range of phocid seals.</title>
        <authorList>
            <person name="Hammond J.A."/>
            <person name="Hall A.J."/>
        </authorList>
    </citation>
    <scope>NUCLEOTIDE SEQUENCE [MRNA]</scope>
</reference>
<sequence>MKALLLLGLLLLSVTVQGKIFERCDLARTLKRLGLAGFKGVSLANWMCLAKWESNYNTKATNYNPGSRSTDYGIFQINSRYWCNDGKTPRAVNACHIPCSDLLKDDITQAVACAKRVVSDPNGIRAWVAWRAHCENQDVSQYVRNCGV</sequence>
<protein>
    <recommendedName>
        <fullName>Lysozyme C</fullName>
        <ecNumber>3.2.1.17</ecNumber>
    </recommendedName>
    <alternativeName>
        <fullName>1,4-beta-N-acetylmuramidase C</fullName>
    </alternativeName>
</protein>
<proteinExistence type="evidence at transcript level"/>
<name>LYSC_HALGR</name>
<accession>Q659U5</accession>
<evidence type="ECO:0000250" key="1"/>
<evidence type="ECO:0000255" key="2">
    <source>
        <dbReference type="PROSITE-ProRule" id="PRU00680"/>
    </source>
</evidence>
<comment type="function">
    <text evidence="2">Lysozymes have primarily a bacteriolytic function; those in tissues and body fluids are associated with the monocyte-macrophage system and enhance the activity of immunoagents.</text>
</comment>
<comment type="catalytic activity">
    <reaction>
        <text>Hydrolysis of (1-&gt;4)-beta-linkages between N-acetylmuramic acid and N-acetyl-D-glucosamine residues in a peptidoglycan and between N-acetyl-D-glucosamine residues in chitodextrins.</text>
        <dbReference type="EC" id="3.2.1.17"/>
    </reaction>
</comment>
<comment type="subunit">
    <text evidence="1">Monomer.</text>
</comment>
<comment type="miscellaneous">
    <text>Lysozyme C is capable of both hydrolysis and transglycosylation; it also shows a slight esterase activity. It acts rapidly on both peptide-substituted and unsubstituted peptidoglycan, and slowly on chitin oligosaccharides.</text>
</comment>
<comment type="similarity">
    <text evidence="2">Belongs to the glycosyl hydrolase 22 family.</text>
</comment>
<keyword id="KW-0929">Antimicrobial</keyword>
<keyword id="KW-0081">Bacteriolytic enzyme</keyword>
<keyword id="KW-1015">Disulfide bond</keyword>
<keyword id="KW-0326">Glycosidase</keyword>
<keyword id="KW-0378">Hydrolase</keyword>
<keyword id="KW-0732">Signal</keyword>
<gene>
    <name type="primary">LYZ</name>
</gene>
<organism>
    <name type="scientific">Halichoerus grypus</name>
    <name type="common">Gray seal</name>
    <name type="synonym">Phoca grypus</name>
    <dbReference type="NCBI Taxonomy" id="9711"/>
    <lineage>
        <taxon>Eukaryota</taxon>
        <taxon>Metazoa</taxon>
        <taxon>Chordata</taxon>
        <taxon>Craniata</taxon>
        <taxon>Vertebrata</taxon>
        <taxon>Euteleostomi</taxon>
        <taxon>Mammalia</taxon>
        <taxon>Eutheria</taxon>
        <taxon>Laurasiatheria</taxon>
        <taxon>Carnivora</taxon>
        <taxon>Caniformia</taxon>
        <taxon>Pinnipedia</taxon>
        <taxon>Phocidae</taxon>
        <taxon>Phocinae</taxon>
        <taxon>Halichoerus</taxon>
    </lineage>
</organism>
<feature type="signal peptide" evidence="1">
    <location>
        <begin position="1"/>
        <end position="18"/>
    </location>
</feature>
<feature type="chain" id="PRO_0000018466" description="Lysozyme C">
    <location>
        <begin position="19"/>
        <end position="148"/>
    </location>
</feature>
<feature type="domain" description="C-type lysozyme" evidence="2">
    <location>
        <begin position="19"/>
        <end position="148"/>
    </location>
</feature>
<feature type="active site" evidence="2">
    <location>
        <position position="53"/>
    </location>
</feature>
<feature type="active site" evidence="2">
    <location>
        <position position="71"/>
    </location>
</feature>
<feature type="disulfide bond" evidence="2">
    <location>
        <begin position="24"/>
        <end position="146"/>
    </location>
</feature>
<feature type="disulfide bond" evidence="2">
    <location>
        <begin position="48"/>
        <end position="134"/>
    </location>
</feature>
<feature type="disulfide bond" evidence="2">
    <location>
        <begin position="83"/>
        <end position="99"/>
    </location>
</feature>
<feature type="disulfide bond" evidence="2">
    <location>
        <begin position="95"/>
        <end position="113"/>
    </location>
</feature>
<dbReference type="EC" id="3.2.1.17"/>
<dbReference type="EMBL" id="AJ831408">
    <property type="protein sequence ID" value="CAH39859.1"/>
    <property type="molecule type" value="mRNA"/>
</dbReference>
<dbReference type="RefSeq" id="XP_035966292.1">
    <property type="nucleotide sequence ID" value="XM_036110399.1"/>
</dbReference>
<dbReference type="RefSeq" id="XP_035966293.1">
    <property type="nucleotide sequence ID" value="XM_036110400.1"/>
</dbReference>
<dbReference type="SMR" id="Q659U5"/>
<dbReference type="CAZy" id="GH22">
    <property type="family name" value="Glycoside Hydrolase Family 22"/>
</dbReference>
<dbReference type="GeneID" id="118547136"/>
<dbReference type="GO" id="GO:0003796">
    <property type="term" value="F:lysozyme activity"/>
    <property type="evidence" value="ECO:0007669"/>
    <property type="project" value="UniProtKB-EC"/>
</dbReference>
<dbReference type="GO" id="GO:0050829">
    <property type="term" value="P:defense response to Gram-negative bacterium"/>
    <property type="evidence" value="ECO:0007669"/>
    <property type="project" value="TreeGrafter"/>
</dbReference>
<dbReference type="GO" id="GO:0050830">
    <property type="term" value="P:defense response to Gram-positive bacterium"/>
    <property type="evidence" value="ECO:0007669"/>
    <property type="project" value="TreeGrafter"/>
</dbReference>
<dbReference type="GO" id="GO:0031640">
    <property type="term" value="P:killing of cells of another organism"/>
    <property type="evidence" value="ECO:0007669"/>
    <property type="project" value="UniProtKB-KW"/>
</dbReference>
<dbReference type="CDD" id="cd16897">
    <property type="entry name" value="LYZ_C"/>
    <property type="match status" value="1"/>
</dbReference>
<dbReference type="FunFam" id="1.10.530.10:FF:000001">
    <property type="entry name" value="Lysozyme C"/>
    <property type="match status" value="1"/>
</dbReference>
<dbReference type="Gene3D" id="1.10.530.10">
    <property type="match status" value="1"/>
</dbReference>
<dbReference type="InterPro" id="IPR001916">
    <property type="entry name" value="Glyco_hydro_22"/>
</dbReference>
<dbReference type="InterPro" id="IPR019799">
    <property type="entry name" value="Glyco_hydro_22_CS"/>
</dbReference>
<dbReference type="InterPro" id="IPR000974">
    <property type="entry name" value="Glyco_hydro_22_lys"/>
</dbReference>
<dbReference type="InterPro" id="IPR023346">
    <property type="entry name" value="Lysozyme-like_dom_sf"/>
</dbReference>
<dbReference type="PANTHER" id="PTHR11407">
    <property type="entry name" value="LYSOZYME C"/>
    <property type="match status" value="1"/>
</dbReference>
<dbReference type="PANTHER" id="PTHR11407:SF28">
    <property type="entry name" value="LYSOZYME C"/>
    <property type="match status" value="1"/>
</dbReference>
<dbReference type="Pfam" id="PF00062">
    <property type="entry name" value="Lys"/>
    <property type="match status" value="1"/>
</dbReference>
<dbReference type="PRINTS" id="PR00137">
    <property type="entry name" value="LYSOZYME"/>
</dbReference>
<dbReference type="PRINTS" id="PR00135">
    <property type="entry name" value="LYZLACT"/>
</dbReference>
<dbReference type="SMART" id="SM00263">
    <property type="entry name" value="LYZ1"/>
    <property type="match status" value="1"/>
</dbReference>
<dbReference type="SUPFAM" id="SSF53955">
    <property type="entry name" value="Lysozyme-like"/>
    <property type="match status" value="1"/>
</dbReference>
<dbReference type="PROSITE" id="PS00128">
    <property type="entry name" value="GLYCOSYL_HYDROL_F22_1"/>
    <property type="match status" value="1"/>
</dbReference>
<dbReference type="PROSITE" id="PS51348">
    <property type="entry name" value="GLYCOSYL_HYDROL_F22_2"/>
    <property type="match status" value="1"/>
</dbReference>